<dbReference type="EC" id="3.5.1.44" evidence="1"/>
<dbReference type="EMBL" id="AE001437">
    <property type="protein sequence ID" value="AAK80180.1"/>
    <property type="molecule type" value="Genomic_DNA"/>
</dbReference>
<dbReference type="PIR" id="A97174">
    <property type="entry name" value="A97174"/>
</dbReference>
<dbReference type="RefSeq" id="NP_348840.1">
    <property type="nucleotide sequence ID" value="NC_003030.1"/>
</dbReference>
<dbReference type="RefSeq" id="WP_010965521.1">
    <property type="nucleotide sequence ID" value="NC_003030.1"/>
</dbReference>
<dbReference type="SMR" id="Q97GZ2"/>
<dbReference type="STRING" id="272562.CA_C2223"/>
<dbReference type="KEGG" id="cac:CA_C2223"/>
<dbReference type="PATRIC" id="fig|272562.8.peg.2424"/>
<dbReference type="eggNOG" id="COG1871">
    <property type="taxonomic scope" value="Bacteria"/>
</dbReference>
<dbReference type="HOGENOM" id="CLU_087854_2_0_9"/>
<dbReference type="OrthoDB" id="9807202at2"/>
<dbReference type="Proteomes" id="UP000000814">
    <property type="component" value="Chromosome"/>
</dbReference>
<dbReference type="GO" id="GO:0050568">
    <property type="term" value="F:protein-glutamine glutaminase activity"/>
    <property type="evidence" value="ECO:0007669"/>
    <property type="project" value="UniProtKB-UniRule"/>
</dbReference>
<dbReference type="GO" id="GO:0006935">
    <property type="term" value="P:chemotaxis"/>
    <property type="evidence" value="ECO:0007669"/>
    <property type="project" value="UniProtKB-UniRule"/>
</dbReference>
<dbReference type="CDD" id="cd16352">
    <property type="entry name" value="CheD"/>
    <property type="match status" value="1"/>
</dbReference>
<dbReference type="Gene3D" id="3.30.1330.200">
    <property type="match status" value="1"/>
</dbReference>
<dbReference type="HAMAP" id="MF_01440">
    <property type="entry name" value="CheD"/>
    <property type="match status" value="1"/>
</dbReference>
<dbReference type="InterPro" id="IPR038592">
    <property type="entry name" value="CheD-like_sf"/>
</dbReference>
<dbReference type="InterPro" id="IPR005659">
    <property type="entry name" value="Chemorcpt_Glu_NH3ase_CheD"/>
</dbReference>
<dbReference type="InterPro" id="IPR011324">
    <property type="entry name" value="Cytotoxic_necrot_fac-like_cat"/>
</dbReference>
<dbReference type="NCBIfam" id="NF010015">
    <property type="entry name" value="PRK13490.1"/>
    <property type="match status" value="1"/>
</dbReference>
<dbReference type="PANTHER" id="PTHR35147">
    <property type="entry name" value="CHEMORECEPTOR GLUTAMINE DEAMIDASE CHED-RELATED"/>
    <property type="match status" value="1"/>
</dbReference>
<dbReference type="PANTHER" id="PTHR35147:SF1">
    <property type="entry name" value="CHEMORECEPTOR GLUTAMINE DEAMIDASE CHED-RELATED"/>
    <property type="match status" value="1"/>
</dbReference>
<dbReference type="Pfam" id="PF03975">
    <property type="entry name" value="CheD"/>
    <property type="match status" value="1"/>
</dbReference>
<dbReference type="SUPFAM" id="SSF64438">
    <property type="entry name" value="CNF1/YfiH-like putative cysteine hydrolases"/>
    <property type="match status" value="1"/>
</dbReference>
<evidence type="ECO:0000255" key="1">
    <source>
        <dbReference type="HAMAP-Rule" id="MF_01440"/>
    </source>
</evidence>
<organism>
    <name type="scientific">Clostridium acetobutylicum (strain ATCC 824 / DSM 792 / JCM 1419 / IAM 19013 / LMG 5710 / NBRC 13948 / NRRL B-527 / VKM B-1787 / 2291 / W)</name>
    <dbReference type="NCBI Taxonomy" id="272562"/>
    <lineage>
        <taxon>Bacteria</taxon>
        <taxon>Bacillati</taxon>
        <taxon>Bacillota</taxon>
        <taxon>Clostridia</taxon>
        <taxon>Eubacteriales</taxon>
        <taxon>Clostridiaceae</taxon>
        <taxon>Clostridium</taxon>
    </lineage>
</organism>
<proteinExistence type="inferred from homology"/>
<feature type="chain" id="PRO_0000251024" description="Probable chemoreceptor glutamine deamidase CheD">
    <location>
        <begin position="1"/>
        <end position="166"/>
    </location>
</feature>
<protein>
    <recommendedName>
        <fullName evidence="1">Probable chemoreceptor glutamine deamidase CheD</fullName>
        <ecNumber evidence="1">3.5.1.44</ecNumber>
    </recommendedName>
</protein>
<accession>Q97GZ2</accession>
<keyword id="KW-0145">Chemotaxis</keyword>
<keyword id="KW-0378">Hydrolase</keyword>
<keyword id="KW-1185">Reference proteome</keyword>
<comment type="function">
    <text evidence="1">Probably deamidates glutamine residues to glutamate on methyl-accepting chemotaxis receptors (MCPs), playing an important role in chemotaxis.</text>
</comment>
<comment type="catalytic activity">
    <reaction evidence="1">
        <text>L-glutaminyl-[protein] + H2O = L-glutamyl-[protein] + NH4(+)</text>
        <dbReference type="Rhea" id="RHEA:16441"/>
        <dbReference type="Rhea" id="RHEA-COMP:10207"/>
        <dbReference type="Rhea" id="RHEA-COMP:10208"/>
        <dbReference type="ChEBI" id="CHEBI:15377"/>
        <dbReference type="ChEBI" id="CHEBI:28938"/>
        <dbReference type="ChEBI" id="CHEBI:29973"/>
        <dbReference type="ChEBI" id="CHEBI:30011"/>
        <dbReference type="EC" id="3.5.1.44"/>
    </reaction>
</comment>
<comment type="similarity">
    <text evidence="1">Belongs to the CheD family.</text>
</comment>
<sequence length="166" mass="18075">MEERENIKEIRVGIADLNTAFSPNRIITVGLGSCIGIAIYDSKNKLGGLSHIMLPDSTQFSKVTNPYKFADLAIPILIKKMEGMGANIRNMKAKIAGGASMFNFSDKNMNMDIGNRNGISVKKVLKELNVPLLSQDIGGNKGRTMIFNTLDGSVDIRTVGMGIRKI</sequence>
<name>CHED_CLOAB</name>
<reference key="1">
    <citation type="journal article" date="2001" name="J. Bacteriol.">
        <title>Genome sequence and comparative analysis of the solvent-producing bacterium Clostridium acetobutylicum.</title>
        <authorList>
            <person name="Noelling J."/>
            <person name="Breton G."/>
            <person name="Omelchenko M.V."/>
            <person name="Makarova K.S."/>
            <person name="Zeng Q."/>
            <person name="Gibson R."/>
            <person name="Lee H.M."/>
            <person name="Dubois J."/>
            <person name="Qiu D."/>
            <person name="Hitti J."/>
            <person name="Wolf Y.I."/>
            <person name="Tatusov R.L."/>
            <person name="Sabathe F."/>
            <person name="Doucette-Stamm L.A."/>
            <person name="Soucaille P."/>
            <person name="Daly M.J."/>
            <person name="Bennett G.N."/>
            <person name="Koonin E.V."/>
            <person name="Smith D.R."/>
        </authorList>
    </citation>
    <scope>NUCLEOTIDE SEQUENCE [LARGE SCALE GENOMIC DNA]</scope>
    <source>
        <strain>ATCC 824 / DSM 792 / JCM 1419 / IAM 19013 / LMG 5710 / NBRC 13948 / NRRL B-527 / VKM B-1787 / 2291 / W</strain>
    </source>
</reference>
<gene>
    <name evidence="1" type="primary">cheD</name>
    <name type="ordered locus">CA_C2223</name>
</gene>